<protein>
    <recommendedName>
        <fullName>Transaldolase B</fullName>
        <ecNumber>2.2.1.2</ecNumber>
    </recommendedName>
</protein>
<reference key="1">
    <citation type="journal article" date="2001" name="Nature">
        <title>Genome sequence of enterohaemorrhagic Escherichia coli O157:H7.</title>
        <authorList>
            <person name="Perna N.T."/>
            <person name="Plunkett G. III"/>
            <person name="Burland V."/>
            <person name="Mau B."/>
            <person name="Glasner J.D."/>
            <person name="Rose D.J."/>
            <person name="Mayhew G.F."/>
            <person name="Evans P.S."/>
            <person name="Gregor J."/>
            <person name="Kirkpatrick H.A."/>
            <person name="Posfai G."/>
            <person name="Hackett J."/>
            <person name="Klink S."/>
            <person name="Boutin A."/>
            <person name="Shao Y."/>
            <person name="Miller L."/>
            <person name="Grotbeck E.J."/>
            <person name="Davis N.W."/>
            <person name="Lim A."/>
            <person name="Dimalanta E.T."/>
            <person name="Potamousis K."/>
            <person name="Apodaca J."/>
            <person name="Anantharaman T.S."/>
            <person name="Lin J."/>
            <person name="Yen G."/>
            <person name="Schwartz D.C."/>
            <person name="Welch R.A."/>
            <person name="Blattner F.R."/>
        </authorList>
    </citation>
    <scope>NUCLEOTIDE SEQUENCE [LARGE SCALE GENOMIC DNA]</scope>
    <source>
        <strain>O157:H7 / EDL933 / ATCC 700927 / EHEC</strain>
    </source>
</reference>
<reference key="2">
    <citation type="journal article" date="2001" name="DNA Res.">
        <title>Complete genome sequence of enterohemorrhagic Escherichia coli O157:H7 and genomic comparison with a laboratory strain K-12.</title>
        <authorList>
            <person name="Hayashi T."/>
            <person name="Makino K."/>
            <person name="Ohnishi M."/>
            <person name="Kurokawa K."/>
            <person name="Ishii K."/>
            <person name="Yokoyama K."/>
            <person name="Han C.-G."/>
            <person name="Ohtsubo E."/>
            <person name="Nakayama K."/>
            <person name="Murata T."/>
            <person name="Tanaka M."/>
            <person name="Tobe T."/>
            <person name="Iida T."/>
            <person name="Takami H."/>
            <person name="Honda T."/>
            <person name="Sasakawa C."/>
            <person name="Ogasawara N."/>
            <person name="Yasunaga T."/>
            <person name="Kuhara S."/>
            <person name="Shiba T."/>
            <person name="Hattori M."/>
            <person name="Shinagawa H."/>
        </authorList>
    </citation>
    <scope>NUCLEOTIDE SEQUENCE [LARGE SCALE GENOMIC DNA]</scope>
    <source>
        <strain>O157:H7 / Sakai / RIMD 0509952 / EHEC</strain>
    </source>
</reference>
<keyword id="KW-0963">Cytoplasm</keyword>
<keyword id="KW-0570">Pentose shunt</keyword>
<keyword id="KW-1185">Reference proteome</keyword>
<keyword id="KW-0704">Schiff base</keyword>
<keyword id="KW-0808">Transferase</keyword>
<name>TALB_ECO57</name>
<dbReference type="EC" id="2.2.1.2"/>
<dbReference type="EMBL" id="AE005174">
    <property type="protein sequence ID" value="AAG54308.1"/>
    <property type="molecule type" value="Genomic_DNA"/>
</dbReference>
<dbReference type="EMBL" id="BA000007">
    <property type="protein sequence ID" value="BAB33431.1"/>
    <property type="molecule type" value="Genomic_DNA"/>
</dbReference>
<dbReference type="PIR" id="H85480">
    <property type="entry name" value="H85480"/>
</dbReference>
<dbReference type="PIR" id="H90629">
    <property type="entry name" value="H90629"/>
</dbReference>
<dbReference type="RefSeq" id="NP_308035.1">
    <property type="nucleotide sequence ID" value="NC_002695.1"/>
</dbReference>
<dbReference type="SMR" id="P0A871"/>
<dbReference type="STRING" id="155864.Z0008"/>
<dbReference type="GeneID" id="913400"/>
<dbReference type="KEGG" id="ece:Z0008"/>
<dbReference type="KEGG" id="ecs:ECs_0008"/>
<dbReference type="PATRIC" id="fig|386585.9.peg.105"/>
<dbReference type="eggNOG" id="COG0176">
    <property type="taxonomic scope" value="Bacteria"/>
</dbReference>
<dbReference type="HOGENOM" id="CLU_047470_0_1_6"/>
<dbReference type="UniPathway" id="UPA00115">
    <property type="reaction ID" value="UER00414"/>
</dbReference>
<dbReference type="Proteomes" id="UP000000558">
    <property type="component" value="Chromosome"/>
</dbReference>
<dbReference type="Proteomes" id="UP000002519">
    <property type="component" value="Chromosome"/>
</dbReference>
<dbReference type="GO" id="GO:0005829">
    <property type="term" value="C:cytosol"/>
    <property type="evidence" value="ECO:0007669"/>
    <property type="project" value="TreeGrafter"/>
</dbReference>
<dbReference type="GO" id="GO:0004801">
    <property type="term" value="F:transaldolase activity"/>
    <property type="evidence" value="ECO:0000250"/>
    <property type="project" value="UniProtKB"/>
</dbReference>
<dbReference type="GO" id="GO:0005975">
    <property type="term" value="P:carbohydrate metabolic process"/>
    <property type="evidence" value="ECO:0007669"/>
    <property type="project" value="InterPro"/>
</dbReference>
<dbReference type="GO" id="GO:0006098">
    <property type="term" value="P:pentose-phosphate shunt"/>
    <property type="evidence" value="ECO:0007669"/>
    <property type="project" value="UniProtKB-UniRule"/>
</dbReference>
<dbReference type="CDD" id="cd00957">
    <property type="entry name" value="Transaldolase_TalAB"/>
    <property type="match status" value="1"/>
</dbReference>
<dbReference type="FunFam" id="3.20.20.70:FF:000002">
    <property type="entry name" value="Transaldolase"/>
    <property type="match status" value="1"/>
</dbReference>
<dbReference type="Gene3D" id="3.20.20.70">
    <property type="entry name" value="Aldolase class I"/>
    <property type="match status" value="1"/>
</dbReference>
<dbReference type="HAMAP" id="MF_00492">
    <property type="entry name" value="Transaldolase_1"/>
    <property type="match status" value="1"/>
</dbReference>
<dbReference type="InterPro" id="IPR013785">
    <property type="entry name" value="Aldolase_TIM"/>
</dbReference>
<dbReference type="InterPro" id="IPR001585">
    <property type="entry name" value="TAL/FSA"/>
</dbReference>
<dbReference type="InterPro" id="IPR004730">
    <property type="entry name" value="Transaldolase_1"/>
</dbReference>
<dbReference type="InterPro" id="IPR018225">
    <property type="entry name" value="Transaldolase_AS"/>
</dbReference>
<dbReference type="NCBIfam" id="NF009001">
    <property type="entry name" value="PRK12346.1"/>
    <property type="match status" value="1"/>
</dbReference>
<dbReference type="NCBIfam" id="TIGR00874">
    <property type="entry name" value="talAB"/>
    <property type="match status" value="1"/>
</dbReference>
<dbReference type="PANTHER" id="PTHR10683">
    <property type="entry name" value="TRANSALDOLASE"/>
    <property type="match status" value="1"/>
</dbReference>
<dbReference type="PANTHER" id="PTHR10683:SF18">
    <property type="entry name" value="TRANSALDOLASE"/>
    <property type="match status" value="1"/>
</dbReference>
<dbReference type="Pfam" id="PF00923">
    <property type="entry name" value="TAL_FSA"/>
    <property type="match status" value="1"/>
</dbReference>
<dbReference type="SUPFAM" id="SSF51569">
    <property type="entry name" value="Aldolase"/>
    <property type="match status" value="1"/>
</dbReference>
<dbReference type="PROSITE" id="PS01054">
    <property type="entry name" value="TRANSALDOLASE_1"/>
    <property type="match status" value="1"/>
</dbReference>
<dbReference type="PROSITE" id="PS00958">
    <property type="entry name" value="TRANSALDOLASE_2"/>
    <property type="match status" value="1"/>
</dbReference>
<comment type="function">
    <text evidence="1">Transaldolase is important for the balance of metabolites in the pentose-phosphate pathway.</text>
</comment>
<comment type="catalytic activity">
    <reaction>
        <text>D-sedoheptulose 7-phosphate + D-glyceraldehyde 3-phosphate = D-erythrose 4-phosphate + beta-D-fructose 6-phosphate</text>
        <dbReference type="Rhea" id="RHEA:17053"/>
        <dbReference type="ChEBI" id="CHEBI:16897"/>
        <dbReference type="ChEBI" id="CHEBI:57483"/>
        <dbReference type="ChEBI" id="CHEBI:57634"/>
        <dbReference type="ChEBI" id="CHEBI:59776"/>
        <dbReference type="EC" id="2.2.1.2"/>
    </reaction>
</comment>
<comment type="pathway">
    <text>Carbohydrate degradation; pentose phosphate pathway; D-glyceraldehyde 3-phosphate and beta-D-fructose 6-phosphate from D-ribose 5-phosphate and D-xylulose 5-phosphate (non-oxidative stage): step 2/3.</text>
</comment>
<comment type="subunit">
    <text evidence="1">Homodimer.</text>
</comment>
<comment type="subcellular location">
    <subcellularLocation>
        <location evidence="1">Cytoplasm</location>
    </subcellularLocation>
</comment>
<comment type="similarity">
    <text evidence="2">Belongs to the transaldolase family. Type 1 subfamily.</text>
</comment>
<accession>P0A871</accession>
<accession>P30148</accession>
<sequence>MTDKLTSLRQYTTVVADTGDIAAMKLYQPQDATTNPSLILNAAQIPEYRKLIDDAVAWAKQQSNDRAQQIVDATDKLAVNIGLEILKLVPGRISTEVDARLSYDTEASIAKAKRLIKLYNDAGISNDRILIKLASTWQGIRAAEQLEKEGINCNLTLLFSFAQARACAEAGVFLISPFVGRILDWYKANTDKKEYAPAEDPGVVSVSEIYQYYKEHGYETVVMGASFRNIGEILELAGCDRLTIAPALLKELAESEGAIERKLSYTGEVKARPARITESEFLWQHNQDPMAVDKLAEGIRKFAIDQEKLEKMIGDLL</sequence>
<gene>
    <name type="primary">talB</name>
    <name type="ordered locus">Z0008</name>
    <name type="ordered locus">ECs0008</name>
</gene>
<feature type="initiator methionine" description="Removed" evidence="1">
    <location>
        <position position="1"/>
    </location>
</feature>
<feature type="chain" id="PRO_0000173594" description="Transaldolase B">
    <location>
        <begin position="2"/>
        <end position="317"/>
    </location>
</feature>
<feature type="active site" description="Schiff-base intermediate with substrate" evidence="1">
    <location>
        <position position="132"/>
    </location>
</feature>
<organism>
    <name type="scientific">Escherichia coli O157:H7</name>
    <dbReference type="NCBI Taxonomy" id="83334"/>
    <lineage>
        <taxon>Bacteria</taxon>
        <taxon>Pseudomonadati</taxon>
        <taxon>Pseudomonadota</taxon>
        <taxon>Gammaproteobacteria</taxon>
        <taxon>Enterobacterales</taxon>
        <taxon>Enterobacteriaceae</taxon>
        <taxon>Escherichia</taxon>
    </lineage>
</organism>
<proteinExistence type="inferred from homology"/>
<evidence type="ECO:0000250" key="1"/>
<evidence type="ECO:0000305" key="2"/>